<evidence type="ECO:0000255" key="1">
    <source>
        <dbReference type="HAMAP-Rule" id="MF_00281"/>
    </source>
</evidence>
<proteinExistence type="inferred from homology"/>
<feature type="chain" id="PRO_0000126757" description="Phenylalanine--tRNA ligase alpha subunit">
    <location>
        <begin position="1"/>
        <end position="327"/>
    </location>
</feature>
<feature type="binding site" evidence="1">
    <location>
        <position position="252"/>
    </location>
    <ligand>
        <name>Mg(2+)</name>
        <dbReference type="ChEBI" id="CHEBI:18420"/>
        <note>shared with beta subunit</note>
    </ligand>
</feature>
<sequence>MQQLTEIVEQALVIIDQASDLKALDDIRVDYLGKKGKITDMMKMMGSLSPEEKPAFGQAVNDAKQAIQQKLTERIDGLKSAELEAKLIAEKIDVTLPGRTIEIGGLHPVTRTIERIETFFGELGFSVKQGPEIEDDFHNFDALNISEHHPARADHDTFYFNPKLMLRTQTSGVQIRTMETEKPPLRIISPGRVYRNDYDQTHTPMFHQVEGLLVDEHVNFAELKGVLHDFLRNFFEEDLQVRFRPSYFPFTEPSAEVDVMGKNGKWLEVLGCGMVHPNVLRSVGIDPEKYSGFAFGMGVERLTMLRYGVNDLRAFFENDLRFLKQFK</sequence>
<comment type="catalytic activity">
    <reaction evidence="1">
        <text>tRNA(Phe) + L-phenylalanine + ATP = L-phenylalanyl-tRNA(Phe) + AMP + diphosphate + H(+)</text>
        <dbReference type="Rhea" id="RHEA:19413"/>
        <dbReference type="Rhea" id="RHEA-COMP:9668"/>
        <dbReference type="Rhea" id="RHEA-COMP:9699"/>
        <dbReference type="ChEBI" id="CHEBI:15378"/>
        <dbReference type="ChEBI" id="CHEBI:30616"/>
        <dbReference type="ChEBI" id="CHEBI:33019"/>
        <dbReference type="ChEBI" id="CHEBI:58095"/>
        <dbReference type="ChEBI" id="CHEBI:78442"/>
        <dbReference type="ChEBI" id="CHEBI:78531"/>
        <dbReference type="ChEBI" id="CHEBI:456215"/>
        <dbReference type="EC" id="6.1.1.20"/>
    </reaction>
</comment>
<comment type="cofactor">
    <cofactor evidence="1">
        <name>Mg(2+)</name>
        <dbReference type="ChEBI" id="CHEBI:18420"/>
    </cofactor>
    <text evidence="1">Binds 2 magnesium ions per tetramer.</text>
</comment>
<comment type="subunit">
    <text evidence="1">Tetramer of two alpha and two beta subunits.</text>
</comment>
<comment type="subcellular location">
    <subcellularLocation>
        <location evidence="1">Cytoplasm</location>
    </subcellularLocation>
</comment>
<comment type="similarity">
    <text evidence="1">Belongs to the class-II aminoacyl-tRNA synthetase family. Phe-tRNA synthetase alpha subunit type 1 subfamily.</text>
</comment>
<accession>Q8EFA0</accession>
<organism>
    <name type="scientific">Shewanella oneidensis (strain ATCC 700550 / JCM 31522 / CIP 106686 / LMG 19005 / NCIMB 14063 / MR-1)</name>
    <dbReference type="NCBI Taxonomy" id="211586"/>
    <lineage>
        <taxon>Bacteria</taxon>
        <taxon>Pseudomonadati</taxon>
        <taxon>Pseudomonadota</taxon>
        <taxon>Gammaproteobacteria</taxon>
        <taxon>Alteromonadales</taxon>
        <taxon>Shewanellaceae</taxon>
        <taxon>Shewanella</taxon>
    </lineage>
</organism>
<keyword id="KW-0030">Aminoacyl-tRNA synthetase</keyword>
<keyword id="KW-0067">ATP-binding</keyword>
<keyword id="KW-0963">Cytoplasm</keyword>
<keyword id="KW-0436">Ligase</keyword>
<keyword id="KW-0460">Magnesium</keyword>
<keyword id="KW-0479">Metal-binding</keyword>
<keyword id="KW-0547">Nucleotide-binding</keyword>
<keyword id="KW-0648">Protein biosynthesis</keyword>
<keyword id="KW-1185">Reference proteome</keyword>
<protein>
    <recommendedName>
        <fullName evidence="1">Phenylalanine--tRNA ligase alpha subunit</fullName>
        <ecNumber evidence="1">6.1.1.20</ecNumber>
    </recommendedName>
    <alternativeName>
        <fullName evidence="1">Phenylalanyl-tRNA synthetase alpha subunit</fullName>
        <shortName evidence="1">PheRS</shortName>
    </alternativeName>
</protein>
<gene>
    <name evidence="1" type="primary">pheS</name>
    <name type="ordered locus">SO_2085</name>
</gene>
<dbReference type="EC" id="6.1.1.20" evidence="1"/>
<dbReference type="EMBL" id="AE014299">
    <property type="protein sequence ID" value="AAN55132.1"/>
    <property type="molecule type" value="Genomic_DNA"/>
</dbReference>
<dbReference type="RefSeq" id="NP_717688.1">
    <property type="nucleotide sequence ID" value="NC_004347.2"/>
</dbReference>
<dbReference type="RefSeq" id="WP_011072149.1">
    <property type="nucleotide sequence ID" value="NC_004347.2"/>
</dbReference>
<dbReference type="SMR" id="Q8EFA0"/>
<dbReference type="STRING" id="211586.SO_2085"/>
<dbReference type="PaxDb" id="211586-SO_2085"/>
<dbReference type="KEGG" id="son:SO_2085"/>
<dbReference type="PATRIC" id="fig|211586.12.peg.2001"/>
<dbReference type="eggNOG" id="COG0016">
    <property type="taxonomic scope" value="Bacteria"/>
</dbReference>
<dbReference type="HOGENOM" id="CLU_025086_0_1_6"/>
<dbReference type="OrthoDB" id="9800719at2"/>
<dbReference type="PhylomeDB" id="Q8EFA0"/>
<dbReference type="BioCyc" id="SONE211586:G1GMP-1916-MONOMER"/>
<dbReference type="Proteomes" id="UP000008186">
    <property type="component" value="Chromosome"/>
</dbReference>
<dbReference type="GO" id="GO:0005737">
    <property type="term" value="C:cytoplasm"/>
    <property type="evidence" value="ECO:0000318"/>
    <property type="project" value="GO_Central"/>
</dbReference>
<dbReference type="GO" id="GO:0005524">
    <property type="term" value="F:ATP binding"/>
    <property type="evidence" value="ECO:0007669"/>
    <property type="project" value="UniProtKB-UniRule"/>
</dbReference>
<dbReference type="GO" id="GO:0000287">
    <property type="term" value="F:magnesium ion binding"/>
    <property type="evidence" value="ECO:0007669"/>
    <property type="project" value="UniProtKB-UniRule"/>
</dbReference>
<dbReference type="GO" id="GO:0004826">
    <property type="term" value="F:phenylalanine-tRNA ligase activity"/>
    <property type="evidence" value="ECO:0000318"/>
    <property type="project" value="GO_Central"/>
</dbReference>
<dbReference type="GO" id="GO:0000049">
    <property type="term" value="F:tRNA binding"/>
    <property type="evidence" value="ECO:0007669"/>
    <property type="project" value="InterPro"/>
</dbReference>
<dbReference type="GO" id="GO:0006432">
    <property type="term" value="P:phenylalanyl-tRNA aminoacylation"/>
    <property type="evidence" value="ECO:0000318"/>
    <property type="project" value="GO_Central"/>
</dbReference>
<dbReference type="CDD" id="cd00496">
    <property type="entry name" value="PheRS_alpha_core"/>
    <property type="match status" value="1"/>
</dbReference>
<dbReference type="FunFam" id="3.30.930.10:FF:000003">
    <property type="entry name" value="Phenylalanine--tRNA ligase alpha subunit"/>
    <property type="match status" value="1"/>
</dbReference>
<dbReference type="Gene3D" id="3.30.930.10">
    <property type="entry name" value="Bira Bifunctional Protein, Domain 2"/>
    <property type="match status" value="1"/>
</dbReference>
<dbReference type="HAMAP" id="MF_00281">
    <property type="entry name" value="Phe_tRNA_synth_alpha1"/>
    <property type="match status" value="1"/>
</dbReference>
<dbReference type="InterPro" id="IPR006195">
    <property type="entry name" value="aa-tRNA-synth_II"/>
</dbReference>
<dbReference type="InterPro" id="IPR045864">
    <property type="entry name" value="aa-tRNA-synth_II/BPL/LPL"/>
</dbReference>
<dbReference type="InterPro" id="IPR004529">
    <property type="entry name" value="Phe-tRNA-synth_IIc_asu"/>
</dbReference>
<dbReference type="InterPro" id="IPR004188">
    <property type="entry name" value="Phe-tRNA_ligase_II_N"/>
</dbReference>
<dbReference type="InterPro" id="IPR022911">
    <property type="entry name" value="Phe_tRNA_ligase_alpha1_bac"/>
</dbReference>
<dbReference type="InterPro" id="IPR002319">
    <property type="entry name" value="Phenylalanyl-tRNA_Synthase"/>
</dbReference>
<dbReference type="InterPro" id="IPR010978">
    <property type="entry name" value="tRNA-bd_arm"/>
</dbReference>
<dbReference type="NCBIfam" id="TIGR00468">
    <property type="entry name" value="pheS"/>
    <property type="match status" value="1"/>
</dbReference>
<dbReference type="PANTHER" id="PTHR11538:SF41">
    <property type="entry name" value="PHENYLALANINE--TRNA LIGASE, MITOCHONDRIAL"/>
    <property type="match status" value="1"/>
</dbReference>
<dbReference type="PANTHER" id="PTHR11538">
    <property type="entry name" value="PHENYLALANYL-TRNA SYNTHETASE"/>
    <property type="match status" value="1"/>
</dbReference>
<dbReference type="Pfam" id="PF02912">
    <property type="entry name" value="Phe_tRNA-synt_N"/>
    <property type="match status" value="1"/>
</dbReference>
<dbReference type="Pfam" id="PF01409">
    <property type="entry name" value="tRNA-synt_2d"/>
    <property type="match status" value="1"/>
</dbReference>
<dbReference type="SUPFAM" id="SSF55681">
    <property type="entry name" value="Class II aaRS and biotin synthetases"/>
    <property type="match status" value="1"/>
</dbReference>
<dbReference type="SUPFAM" id="SSF46589">
    <property type="entry name" value="tRNA-binding arm"/>
    <property type="match status" value="1"/>
</dbReference>
<dbReference type="PROSITE" id="PS50862">
    <property type="entry name" value="AA_TRNA_LIGASE_II"/>
    <property type="match status" value="1"/>
</dbReference>
<name>SYFA_SHEON</name>
<reference key="1">
    <citation type="journal article" date="2002" name="Nat. Biotechnol.">
        <title>Genome sequence of the dissimilatory metal ion-reducing bacterium Shewanella oneidensis.</title>
        <authorList>
            <person name="Heidelberg J.F."/>
            <person name="Paulsen I.T."/>
            <person name="Nelson K.E."/>
            <person name="Gaidos E.J."/>
            <person name="Nelson W.C."/>
            <person name="Read T.D."/>
            <person name="Eisen J.A."/>
            <person name="Seshadri R."/>
            <person name="Ward N.L."/>
            <person name="Methe B.A."/>
            <person name="Clayton R.A."/>
            <person name="Meyer T."/>
            <person name="Tsapin A."/>
            <person name="Scott J."/>
            <person name="Beanan M.J."/>
            <person name="Brinkac L.M."/>
            <person name="Daugherty S.C."/>
            <person name="DeBoy R.T."/>
            <person name="Dodson R.J."/>
            <person name="Durkin A.S."/>
            <person name="Haft D.H."/>
            <person name="Kolonay J.F."/>
            <person name="Madupu R."/>
            <person name="Peterson J.D."/>
            <person name="Umayam L.A."/>
            <person name="White O."/>
            <person name="Wolf A.M."/>
            <person name="Vamathevan J.J."/>
            <person name="Weidman J.F."/>
            <person name="Impraim M."/>
            <person name="Lee K."/>
            <person name="Berry K.J."/>
            <person name="Lee C."/>
            <person name="Mueller J."/>
            <person name="Khouri H.M."/>
            <person name="Gill J."/>
            <person name="Utterback T.R."/>
            <person name="McDonald L.A."/>
            <person name="Feldblyum T.V."/>
            <person name="Smith H.O."/>
            <person name="Venter J.C."/>
            <person name="Nealson K.H."/>
            <person name="Fraser C.M."/>
        </authorList>
    </citation>
    <scope>NUCLEOTIDE SEQUENCE [LARGE SCALE GENOMIC DNA]</scope>
    <source>
        <strain>ATCC 700550 / JCM 31522 / CIP 106686 / LMG 19005 / NCIMB 14063 / MR-1</strain>
    </source>
</reference>